<organism>
    <name type="scientific">Echis pyramidum leakeyi</name>
    <name type="common">Leakey's carpet viper</name>
    <name type="synonym">Echis carinatus leakeyi</name>
    <dbReference type="NCBI Taxonomy" id="38415"/>
    <lineage>
        <taxon>Eukaryota</taxon>
        <taxon>Metazoa</taxon>
        <taxon>Chordata</taxon>
        <taxon>Craniata</taxon>
        <taxon>Vertebrata</taxon>
        <taxon>Euteleostomi</taxon>
        <taxon>Lepidosauria</taxon>
        <taxon>Squamata</taxon>
        <taxon>Bifurcata</taxon>
        <taxon>Unidentata</taxon>
        <taxon>Episquamata</taxon>
        <taxon>Toxicofera</taxon>
        <taxon>Serpentes</taxon>
        <taxon>Colubroidea</taxon>
        <taxon>Viperidae</taxon>
        <taxon>Viperinae</taxon>
        <taxon>Echis</taxon>
    </lineage>
</organism>
<dbReference type="SMR" id="P0C6R8"/>
<dbReference type="GO" id="GO:0005576">
    <property type="term" value="C:extracellular region"/>
    <property type="evidence" value="ECO:0007669"/>
    <property type="project" value="UniProtKB-SubCell"/>
</dbReference>
<dbReference type="GO" id="GO:0090729">
    <property type="term" value="F:toxin activity"/>
    <property type="evidence" value="ECO:0007669"/>
    <property type="project" value="UniProtKB-KW"/>
</dbReference>
<dbReference type="Gene3D" id="4.10.70.10">
    <property type="entry name" value="Disintegrin domain"/>
    <property type="match status" value="1"/>
</dbReference>
<dbReference type="InterPro" id="IPR018358">
    <property type="entry name" value="Disintegrin_CS"/>
</dbReference>
<dbReference type="InterPro" id="IPR001762">
    <property type="entry name" value="Disintegrin_dom"/>
</dbReference>
<dbReference type="InterPro" id="IPR036436">
    <property type="entry name" value="Disintegrin_dom_sf"/>
</dbReference>
<dbReference type="PRINTS" id="PR00289">
    <property type="entry name" value="DISINTEGRIN"/>
</dbReference>
<dbReference type="SMART" id="SM00050">
    <property type="entry name" value="DISIN"/>
    <property type="match status" value="1"/>
</dbReference>
<dbReference type="SUPFAM" id="SSF57552">
    <property type="entry name" value="Blood coagulation inhibitor (disintegrin)"/>
    <property type="match status" value="1"/>
</dbReference>
<dbReference type="PROSITE" id="PS00427">
    <property type="entry name" value="DISINTEGRIN_1"/>
    <property type="match status" value="1"/>
</dbReference>
<dbReference type="PROSITE" id="PS50214">
    <property type="entry name" value="DISINTEGRIN_2"/>
    <property type="match status" value="1"/>
</dbReference>
<keyword id="KW-1217">Cell adhesion impairing toxin</keyword>
<keyword id="KW-0903">Direct protein sequencing</keyword>
<keyword id="KW-1015">Disulfide bond</keyword>
<keyword id="KW-1199">Hemostasis impairing toxin</keyword>
<keyword id="KW-1201">Platelet aggregation inhibiting toxin</keyword>
<keyword id="KW-0964">Secreted</keyword>
<keyword id="KW-0800">Toxin</keyword>
<comment type="function">
    <text evidence="3">Inhibits ADP-induced human platelet aggregation.</text>
</comment>
<comment type="subunit">
    <text evidence="1">Monomer (disintegrin).</text>
</comment>
<comment type="subcellular location">
    <subcellularLocation>
        <location>Secreted</location>
    </subcellularLocation>
</comment>
<comment type="tissue specificity">
    <text>Expressed by the venom gland.</text>
</comment>
<comment type="miscellaneous">
    <text>The disintegrin belongs to the short disintegrin subfamily.</text>
</comment>
<comment type="similarity">
    <text evidence="4">Belongs to the venom metalloproteinase (M12B) family. P-II subfamily. P-IIa sub-subfamily.</text>
</comment>
<feature type="chain" id="PRO_0000326268" description="Disintegrin pyramidin-B">
    <location>
        <begin position="1"/>
        <end position="49"/>
    </location>
</feature>
<feature type="domain" description="Disintegrin" evidence="2">
    <location>
        <begin position="1"/>
        <end position="47"/>
    </location>
</feature>
<feature type="short sequence motif" description="Cell attachment site">
    <location>
        <begin position="24"/>
        <end position="26"/>
    </location>
</feature>
<feature type="disulfide bond" evidence="2">
    <location>
        <begin position="2"/>
        <end position="11"/>
    </location>
</feature>
<feature type="disulfide bond" evidence="2">
    <location>
        <begin position="7"/>
        <end position="32"/>
    </location>
</feature>
<feature type="disulfide bond" evidence="2">
    <location>
        <begin position="8"/>
        <end position="37"/>
    </location>
</feature>
<feature type="disulfide bond" evidence="2">
    <location>
        <begin position="20"/>
        <end position="39"/>
    </location>
</feature>
<sequence>DCASGPCCRDCKFLEEGTICNMARGDDMDDYCNGKTCDCPRNPHKWPAP</sequence>
<evidence type="ECO:0000250" key="1"/>
<evidence type="ECO:0000255" key="2">
    <source>
        <dbReference type="PROSITE-ProRule" id="PRU00068"/>
    </source>
</evidence>
<evidence type="ECO:0000269" key="3">
    <source>
    </source>
</evidence>
<evidence type="ECO:0000305" key="4"/>
<proteinExistence type="evidence at protein level"/>
<reference key="1">
    <citation type="journal article" date="2001" name="J. Biochem.">
        <title>Comparative biochemistry of disintegrins isolated from snake venom: consideration of the taxonomy and geographical distribution of snakes in the genus Echis.</title>
        <authorList>
            <person name="Okuda D."/>
            <person name="Nozaki C."/>
            <person name="Sekiya F."/>
            <person name="Morita T."/>
        </authorList>
    </citation>
    <scope>PROTEIN SEQUENCE</scope>
    <scope>FUNCTION</scope>
    <source>
        <tissue>Venom</tissue>
    </source>
</reference>
<name>VM2PB_ECHPL</name>
<accession>P0C6R8</accession>
<protein>
    <recommendedName>
        <fullName>Disintegrin pyramidin-B</fullName>
    </recommendedName>
</protein>